<protein>
    <recommendedName>
        <fullName evidence="1">Cysteine--tRNA ligase</fullName>
        <ecNumber evidence="1">6.1.1.16</ecNumber>
    </recommendedName>
    <alternativeName>
        <fullName evidence="1">Cysteinyl-tRNA synthetase</fullName>
        <shortName evidence="1">CysRS</shortName>
    </alternativeName>
</protein>
<accession>Q03SU6</accession>
<name>SYC_LEVBA</name>
<dbReference type="EC" id="6.1.1.16" evidence="1"/>
<dbReference type="EMBL" id="CP000416">
    <property type="protein sequence ID" value="ABJ63726.1"/>
    <property type="molecule type" value="Genomic_DNA"/>
</dbReference>
<dbReference type="RefSeq" id="WP_011667351.1">
    <property type="nucleotide sequence ID" value="NC_008497.1"/>
</dbReference>
<dbReference type="SMR" id="Q03SU6"/>
<dbReference type="STRING" id="387344.LVIS_0580"/>
<dbReference type="KEGG" id="lbr:LVIS_0580"/>
<dbReference type="eggNOG" id="COG0215">
    <property type="taxonomic scope" value="Bacteria"/>
</dbReference>
<dbReference type="HOGENOM" id="CLU_013528_0_1_9"/>
<dbReference type="Proteomes" id="UP000001652">
    <property type="component" value="Chromosome"/>
</dbReference>
<dbReference type="GO" id="GO:0005829">
    <property type="term" value="C:cytosol"/>
    <property type="evidence" value="ECO:0007669"/>
    <property type="project" value="TreeGrafter"/>
</dbReference>
<dbReference type="GO" id="GO:0005524">
    <property type="term" value="F:ATP binding"/>
    <property type="evidence" value="ECO:0007669"/>
    <property type="project" value="UniProtKB-UniRule"/>
</dbReference>
<dbReference type="GO" id="GO:0004817">
    <property type="term" value="F:cysteine-tRNA ligase activity"/>
    <property type="evidence" value="ECO:0007669"/>
    <property type="project" value="UniProtKB-UniRule"/>
</dbReference>
<dbReference type="GO" id="GO:0008270">
    <property type="term" value="F:zinc ion binding"/>
    <property type="evidence" value="ECO:0007669"/>
    <property type="project" value="UniProtKB-UniRule"/>
</dbReference>
<dbReference type="GO" id="GO:0006423">
    <property type="term" value="P:cysteinyl-tRNA aminoacylation"/>
    <property type="evidence" value="ECO:0007669"/>
    <property type="project" value="UniProtKB-UniRule"/>
</dbReference>
<dbReference type="CDD" id="cd00672">
    <property type="entry name" value="CysRS_core"/>
    <property type="match status" value="1"/>
</dbReference>
<dbReference type="FunFam" id="3.40.50.620:FF:000009">
    <property type="entry name" value="Cysteine--tRNA ligase"/>
    <property type="match status" value="1"/>
</dbReference>
<dbReference type="Gene3D" id="1.20.120.1910">
    <property type="entry name" value="Cysteine-tRNA ligase, C-terminal anti-codon recognition domain"/>
    <property type="match status" value="1"/>
</dbReference>
<dbReference type="Gene3D" id="3.40.50.620">
    <property type="entry name" value="HUPs"/>
    <property type="match status" value="1"/>
</dbReference>
<dbReference type="HAMAP" id="MF_00041">
    <property type="entry name" value="Cys_tRNA_synth"/>
    <property type="match status" value="1"/>
</dbReference>
<dbReference type="InterPro" id="IPR015803">
    <property type="entry name" value="Cys-tRNA-ligase"/>
</dbReference>
<dbReference type="InterPro" id="IPR015273">
    <property type="entry name" value="Cys-tRNA-synt_Ia_DALR"/>
</dbReference>
<dbReference type="InterPro" id="IPR024909">
    <property type="entry name" value="Cys-tRNA/MSH_ligase"/>
</dbReference>
<dbReference type="InterPro" id="IPR056411">
    <property type="entry name" value="CysS_C"/>
</dbReference>
<dbReference type="InterPro" id="IPR014729">
    <property type="entry name" value="Rossmann-like_a/b/a_fold"/>
</dbReference>
<dbReference type="InterPro" id="IPR032678">
    <property type="entry name" value="tRNA-synt_1_cat_dom"/>
</dbReference>
<dbReference type="InterPro" id="IPR009080">
    <property type="entry name" value="tRNAsynth_Ia_anticodon-bd"/>
</dbReference>
<dbReference type="NCBIfam" id="TIGR00435">
    <property type="entry name" value="cysS"/>
    <property type="match status" value="1"/>
</dbReference>
<dbReference type="PANTHER" id="PTHR10890:SF3">
    <property type="entry name" value="CYSTEINE--TRNA LIGASE, CYTOPLASMIC"/>
    <property type="match status" value="1"/>
</dbReference>
<dbReference type="PANTHER" id="PTHR10890">
    <property type="entry name" value="CYSTEINYL-TRNA SYNTHETASE"/>
    <property type="match status" value="1"/>
</dbReference>
<dbReference type="Pfam" id="PF23493">
    <property type="entry name" value="CysS_C"/>
    <property type="match status" value="1"/>
</dbReference>
<dbReference type="Pfam" id="PF09190">
    <property type="entry name" value="DALR_2"/>
    <property type="match status" value="1"/>
</dbReference>
<dbReference type="Pfam" id="PF01406">
    <property type="entry name" value="tRNA-synt_1e"/>
    <property type="match status" value="1"/>
</dbReference>
<dbReference type="PRINTS" id="PR00983">
    <property type="entry name" value="TRNASYNTHCYS"/>
</dbReference>
<dbReference type="SMART" id="SM00840">
    <property type="entry name" value="DALR_2"/>
    <property type="match status" value="1"/>
</dbReference>
<dbReference type="SUPFAM" id="SSF47323">
    <property type="entry name" value="Anticodon-binding domain of a subclass of class I aminoacyl-tRNA synthetases"/>
    <property type="match status" value="1"/>
</dbReference>
<dbReference type="SUPFAM" id="SSF52374">
    <property type="entry name" value="Nucleotidylyl transferase"/>
    <property type="match status" value="1"/>
</dbReference>
<feature type="chain" id="PRO_1000074617" description="Cysteine--tRNA ligase">
    <location>
        <begin position="1"/>
        <end position="470"/>
    </location>
</feature>
<feature type="short sequence motif" description="'HIGH' region">
    <location>
        <begin position="30"/>
        <end position="40"/>
    </location>
</feature>
<feature type="short sequence motif" description="'KMSKS' region">
    <location>
        <begin position="271"/>
        <end position="275"/>
    </location>
</feature>
<feature type="binding site" evidence="1">
    <location>
        <position position="28"/>
    </location>
    <ligand>
        <name>Zn(2+)</name>
        <dbReference type="ChEBI" id="CHEBI:29105"/>
    </ligand>
</feature>
<feature type="binding site" evidence="1">
    <location>
        <position position="212"/>
    </location>
    <ligand>
        <name>Zn(2+)</name>
        <dbReference type="ChEBI" id="CHEBI:29105"/>
    </ligand>
</feature>
<feature type="binding site" evidence="1">
    <location>
        <position position="237"/>
    </location>
    <ligand>
        <name>Zn(2+)</name>
        <dbReference type="ChEBI" id="CHEBI:29105"/>
    </ligand>
</feature>
<feature type="binding site" evidence="1">
    <location>
        <position position="241"/>
    </location>
    <ligand>
        <name>Zn(2+)</name>
        <dbReference type="ChEBI" id="CHEBI:29105"/>
    </ligand>
</feature>
<feature type="binding site" evidence="1">
    <location>
        <position position="274"/>
    </location>
    <ligand>
        <name>ATP</name>
        <dbReference type="ChEBI" id="CHEBI:30616"/>
    </ligand>
</feature>
<sequence>MLKVFNTMTRQKETFEPITPGVVNMYVCGPTVYNYIHIGNARSAIAFDTIRRYFEYRGYQVKYVSNFTDVDDKMINEANKEGITVPELGDRFIAAFKEDTAALNIEPATVNPRATEHINEIIEFVQDLIDKDYAYPVDGDVYYRAHKFSHYGELAHLNLDDLEEGASQHTNDEETARKEDPVDFALWKGAKPGEISWPSPWGAGRPGWHIECSVMSTHYLGETFDIHGGGEDLIFPHHQNEIAQSEAKTGKTFVHYWLHNGFVTIGDDNEKMSKSLGNFVTVHDILKTVDPQTLRFFMSTTQYRRPIQYTQQNLDTAERNLERLQTAYDNMGYRLKDAEAGNDPKVEQETRQIVADYIDAMDDDFNVQNGIAKVHELARLGNVYAERPVVFAGTLDFIRQTLSDLLSVFGIKFAAAATLDDDRIQALIDERLAARKSRDFLRSDEIREQLKSQGIILEDTPQGTRWRKEN</sequence>
<evidence type="ECO:0000255" key="1">
    <source>
        <dbReference type="HAMAP-Rule" id="MF_00041"/>
    </source>
</evidence>
<proteinExistence type="inferred from homology"/>
<keyword id="KW-0030">Aminoacyl-tRNA synthetase</keyword>
<keyword id="KW-0067">ATP-binding</keyword>
<keyword id="KW-0963">Cytoplasm</keyword>
<keyword id="KW-0436">Ligase</keyword>
<keyword id="KW-0479">Metal-binding</keyword>
<keyword id="KW-0547">Nucleotide-binding</keyword>
<keyword id="KW-0648">Protein biosynthesis</keyword>
<keyword id="KW-1185">Reference proteome</keyword>
<keyword id="KW-0862">Zinc</keyword>
<organism>
    <name type="scientific">Levilactobacillus brevis (strain ATCC 367 / BCRC 12310 / CIP 105137 / JCM 1170 / LMG 11437 / NCIMB 947 / NCTC 947)</name>
    <name type="common">Lactobacillus brevis</name>
    <dbReference type="NCBI Taxonomy" id="387344"/>
    <lineage>
        <taxon>Bacteria</taxon>
        <taxon>Bacillati</taxon>
        <taxon>Bacillota</taxon>
        <taxon>Bacilli</taxon>
        <taxon>Lactobacillales</taxon>
        <taxon>Lactobacillaceae</taxon>
        <taxon>Levilactobacillus</taxon>
    </lineage>
</organism>
<gene>
    <name evidence="1" type="primary">cysS</name>
    <name type="ordered locus">LVIS_0580</name>
</gene>
<reference key="1">
    <citation type="journal article" date="2006" name="Proc. Natl. Acad. Sci. U.S.A.">
        <title>Comparative genomics of the lactic acid bacteria.</title>
        <authorList>
            <person name="Makarova K.S."/>
            <person name="Slesarev A."/>
            <person name="Wolf Y.I."/>
            <person name="Sorokin A."/>
            <person name="Mirkin B."/>
            <person name="Koonin E.V."/>
            <person name="Pavlov A."/>
            <person name="Pavlova N."/>
            <person name="Karamychev V."/>
            <person name="Polouchine N."/>
            <person name="Shakhova V."/>
            <person name="Grigoriev I."/>
            <person name="Lou Y."/>
            <person name="Rohksar D."/>
            <person name="Lucas S."/>
            <person name="Huang K."/>
            <person name="Goodstein D.M."/>
            <person name="Hawkins T."/>
            <person name="Plengvidhya V."/>
            <person name="Welker D."/>
            <person name="Hughes J."/>
            <person name="Goh Y."/>
            <person name="Benson A."/>
            <person name="Baldwin K."/>
            <person name="Lee J.-H."/>
            <person name="Diaz-Muniz I."/>
            <person name="Dosti B."/>
            <person name="Smeianov V."/>
            <person name="Wechter W."/>
            <person name="Barabote R."/>
            <person name="Lorca G."/>
            <person name="Altermann E."/>
            <person name="Barrangou R."/>
            <person name="Ganesan B."/>
            <person name="Xie Y."/>
            <person name="Rawsthorne H."/>
            <person name="Tamir D."/>
            <person name="Parker C."/>
            <person name="Breidt F."/>
            <person name="Broadbent J.R."/>
            <person name="Hutkins R."/>
            <person name="O'Sullivan D."/>
            <person name="Steele J."/>
            <person name="Unlu G."/>
            <person name="Saier M.H. Jr."/>
            <person name="Klaenhammer T."/>
            <person name="Richardson P."/>
            <person name="Kozyavkin S."/>
            <person name="Weimer B.C."/>
            <person name="Mills D.A."/>
        </authorList>
    </citation>
    <scope>NUCLEOTIDE SEQUENCE [LARGE SCALE GENOMIC DNA]</scope>
    <source>
        <strain>ATCC 367 / BCRC 12310 / CIP 105137 / JCM 1170 / LMG 11437 / NCIMB 947 / NCTC 947</strain>
    </source>
</reference>
<comment type="catalytic activity">
    <reaction evidence="1">
        <text>tRNA(Cys) + L-cysteine + ATP = L-cysteinyl-tRNA(Cys) + AMP + diphosphate</text>
        <dbReference type="Rhea" id="RHEA:17773"/>
        <dbReference type="Rhea" id="RHEA-COMP:9661"/>
        <dbReference type="Rhea" id="RHEA-COMP:9679"/>
        <dbReference type="ChEBI" id="CHEBI:30616"/>
        <dbReference type="ChEBI" id="CHEBI:33019"/>
        <dbReference type="ChEBI" id="CHEBI:35235"/>
        <dbReference type="ChEBI" id="CHEBI:78442"/>
        <dbReference type="ChEBI" id="CHEBI:78517"/>
        <dbReference type="ChEBI" id="CHEBI:456215"/>
        <dbReference type="EC" id="6.1.1.16"/>
    </reaction>
</comment>
<comment type="cofactor">
    <cofactor evidence="1">
        <name>Zn(2+)</name>
        <dbReference type="ChEBI" id="CHEBI:29105"/>
    </cofactor>
    <text evidence="1">Binds 1 zinc ion per subunit.</text>
</comment>
<comment type="subunit">
    <text evidence="1">Monomer.</text>
</comment>
<comment type="subcellular location">
    <subcellularLocation>
        <location evidence="1">Cytoplasm</location>
    </subcellularLocation>
</comment>
<comment type="similarity">
    <text evidence="1">Belongs to the class-I aminoacyl-tRNA synthetase family.</text>
</comment>